<name>UGDH3_ORYSJ</name>
<organism>
    <name type="scientific">Oryza sativa subsp. japonica</name>
    <name type="common">Rice</name>
    <dbReference type="NCBI Taxonomy" id="39947"/>
    <lineage>
        <taxon>Eukaryota</taxon>
        <taxon>Viridiplantae</taxon>
        <taxon>Streptophyta</taxon>
        <taxon>Embryophyta</taxon>
        <taxon>Tracheophyta</taxon>
        <taxon>Spermatophyta</taxon>
        <taxon>Magnoliopsida</taxon>
        <taxon>Liliopsida</taxon>
        <taxon>Poales</taxon>
        <taxon>Poaceae</taxon>
        <taxon>BOP clade</taxon>
        <taxon>Oryzoideae</taxon>
        <taxon>Oryzeae</taxon>
        <taxon>Oryzinae</taxon>
        <taxon>Oryza</taxon>
        <taxon>Oryza sativa</taxon>
    </lineage>
</organism>
<proteinExistence type="evidence at transcript level"/>
<gene>
    <name type="primary">UGD3</name>
    <name type="ordered locus">Os03g0757900</name>
    <name type="ordered locus">LOC_Os03g55070</name>
    <name type="ORF">OsJ_12653</name>
    <name type="ORF">OSJNBa0040E01.8</name>
</gene>
<reference key="1">
    <citation type="journal article" date="2005" name="Genome Res.">
        <title>Sequence, annotation, and analysis of synteny between rice chromosome 3 and diverged grass species.</title>
        <authorList>
            <consortium name="The rice chromosome 3 sequencing consortium"/>
            <person name="Buell C.R."/>
            <person name="Yuan Q."/>
            <person name="Ouyang S."/>
            <person name="Liu J."/>
            <person name="Zhu W."/>
            <person name="Wang A."/>
            <person name="Maiti R."/>
            <person name="Haas B."/>
            <person name="Wortman J."/>
            <person name="Pertea M."/>
            <person name="Jones K.M."/>
            <person name="Kim M."/>
            <person name="Overton L."/>
            <person name="Tsitrin T."/>
            <person name="Fadrosh D."/>
            <person name="Bera J."/>
            <person name="Weaver B."/>
            <person name="Jin S."/>
            <person name="Johri S."/>
            <person name="Reardon M."/>
            <person name="Webb K."/>
            <person name="Hill J."/>
            <person name="Moffat K."/>
            <person name="Tallon L."/>
            <person name="Van Aken S."/>
            <person name="Lewis M."/>
            <person name="Utterback T."/>
            <person name="Feldblyum T."/>
            <person name="Zismann V."/>
            <person name="Iobst S."/>
            <person name="Hsiao J."/>
            <person name="de Vazeille A.R."/>
            <person name="Salzberg S.L."/>
            <person name="White O."/>
            <person name="Fraser C.M."/>
            <person name="Yu Y."/>
            <person name="Kim H."/>
            <person name="Rambo T."/>
            <person name="Currie J."/>
            <person name="Collura K."/>
            <person name="Kernodle-Thompson S."/>
            <person name="Wei F."/>
            <person name="Kudrna K."/>
            <person name="Ammiraju J.S.S."/>
            <person name="Luo M."/>
            <person name="Goicoechea J.L."/>
            <person name="Wing R.A."/>
            <person name="Henry D."/>
            <person name="Oates R."/>
            <person name="Palmer M."/>
            <person name="Pries G."/>
            <person name="Saski C."/>
            <person name="Simmons J."/>
            <person name="Soderlund C."/>
            <person name="Nelson W."/>
            <person name="de la Bastide M."/>
            <person name="Spiegel L."/>
            <person name="Nascimento L."/>
            <person name="Huang E."/>
            <person name="Preston R."/>
            <person name="Zutavern T."/>
            <person name="Palmer L."/>
            <person name="O'Shaughnessy A."/>
            <person name="Dike S."/>
            <person name="McCombie W.R."/>
            <person name="Minx P."/>
            <person name="Cordum H."/>
            <person name="Wilson R."/>
            <person name="Jin W."/>
            <person name="Lee H.R."/>
            <person name="Jiang J."/>
            <person name="Jackson S."/>
        </authorList>
    </citation>
    <scope>NUCLEOTIDE SEQUENCE [LARGE SCALE GENOMIC DNA]</scope>
    <source>
        <strain>cv. Nipponbare</strain>
    </source>
</reference>
<reference key="2">
    <citation type="journal article" date="2005" name="Nature">
        <title>The map-based sequence of the rice genome.</title>
        <authorList>
            <consortium name="International rice genome sequencing project (IRGSP)"/>
        </authorList>
    </citation>
    <scope>NUCLEOTIDE SEQUENCE [LARGE SCALE GENOMIC DNA]</scope>
    <source>
        <strain>cv. Nipponbare</strain>
    </source>
</reference>
<reference key="3">
    <citation type="journal article" date="2008" name="Nucleic Acids Res.">
        <title>The rice annotation project database (RAP-DB): 2008 update.</title>
        <authorList>
            <consortium name="The rice annotation project (RAP)"/>
        </authorList>
    </citation>
    <scope>GENOME REANNOTATION</scope>
    <source>
        <strain>cv. Nipponbare</strain>
    </source>
</reference>
<reference key="4">
    <citation type="journal article" date="2013" name="Rice">
        <title>Improvement of the Oryza sativa Nipponbare reference genome using next generation sequence and optical map data.</title>
        <authorList>
            <person name="Kawahara Y."/>
            <person name="de la Bastide M."/>
            <person name="Hamilton J.P."/>
            <person name="Kanamori H."/>
            <person name="McCombie W.R."/>
            <person name="Ouyang S."/>
            <person name="Schwartz D.C."/>
            <person name="Tanaka T."/>
            <person name="Wu J."/>
            <person name="Zhou S."/>
            <person name="Childs K.L."/>
            <person name="Davidson R.M."/>
            <person name="Lin H."/>
            <person name="Quesada-Ocampo L."/>
            <person name="Vaillancourt B."/>
            <person name="Sakai H."/>
            <person name="Lee S.S."/>
            <person name="Kim J."/>
            <person name="Numa H."/>
            <person name="Itoh T."/>
            <person name="Buell C.R."/>
            <person name="Matsumoto T."/>
        </authorList>
    </citation>
    <scope>GENOME REANNOTATION</scope>
    <source>
        <strain>cv. Nipponbare</strain>
    </source>
</reference>
<reference key="5">
    <citation type="journal article" date="2005" name="PLoS Biol.">
        <title>The genomes of Oryza sativa: a history of duplications.</title>
        <authorList>
            <person name="Yu J."/>
            <person name="Wang J."/>
            <person name="Lin W."/>
            <person name="Li S."/>
            <person name="Li H."/>
            <person name="Zhou J."/>
            <person name="Ni P."/>
            <person name="Dong W."/>
            <person name="Hu S."/>
            <person name="Zeng C."/>
            <person name="Zhang J."/>
            <person name="Zhang Y."/>
            <person name="Li R."/>
            <person name="Xu Z."/>
            <person name="Li S."/>
            <person name="Li X."/>
            <person name="Zheng H."/>
            <person name="Cong L."/>
            <person name="Lin L."/>
            <person name="Yin J."/>
            <person name="Geng J."/>
            <person name="Li G."/>
            <person name="Shi J."/>
            <person name="Liu J."/>
            <person name="Lv H."/>
            <person name="Li J."/>
            <person name="Wang J."/>
            <person name="Deng Y."/>
            <person name="Ran L."/>
            <person name="Shi X."/>
            <person name="Wang X."/>
            <person name="Wu Q."/>
            <person name="Li C."/>
            <person name="Ren X."/>
            <person name="Wang J."/>
            <person name="Wang X."/>
            <person name="Li D."/>
            <person name="Liu D."/>
            <person name="Zhang X."/>
            <person name="Ji Z."/>
            <person name="Zhao W."/>
            <person name="Sun Y."/>
            <person name="Zhang Z."/>
            <person name="Bao J."/>
            <person name="Han Y."/>
            <person name="Dong L."/>
            <person name="Ji J."/>
            <person name="Chen P."/>
            <person name="Wu S."/>
            <person name="Liu J."/>
            <person name="Xiao Y."/>
            <person name="Bu D."/>
            <person name="Tan J."/>
            <person name="Yang L."/>
            <person name="Ye C."/>
            <person name="Zhang J."/>
            <person name="Xu J."/>
            <person name="Zhou Y."/>
            <person name="Yu Y."/>
            <person name="Zhang B."/>
            <person name="Zhuang S."/>
            <person name="Wei H."/>
            <person name="Liu B."/>
            <person name="Lei M."/>
            <person name="Yu H."/>
            <person name="Li Y."/>
            <person name="Xu H."/>
            <person name="Wei S."/>
            <person name="He X."/>
            <person name="Fang L."/>
            <person name="Zhang Z."/>
            <person name="Zhang Y."/>
            <person name="Huang X."/>
            <person name="Su Z."/>
            <person name="Tong W."/>
            <person name="Li J."/>
            <person name="Tong Z."/>
            <person name="Li S."/>
            <person name="Ye J."/>
            <person name="Wang L."/>
            <person name="Fang L."/>
            <person name="Lei T."/>
            <person name="Chen C.-S."/>
            <person name="Chen H.-C."/>
            <person name="Xu Z."/>
            <person name="Li H."/>
            <person name="Huang H."/>
            <person name="Zhang F."/>
            <person name="Xu H."/>
            <person name="Li N."/>
            <person name="Zhao C."/>
            <person name="Li S."/>
            <person name="Dong L."/>
            <person name="Huang Y."/>
            <person name="Li L."/>
            <person name="Xi Y."/>
            <person name="Qi Q."/>
            <person name="Li W."/>
            <person name="Zhang B."/>
            <person name="Hu W."/>
            <person name="Zhang Y."/>
            <person name="Tian X."/>
            <person name="Jiao Y."/>
            <person name="Liang X."/>
            <person name="Jin J."/>
            <person name="Gao L."/>
            <person name="Zheng W."/>
            <person name="Hao B."/>
            <person name="Liu S.-M."/>
            <person name="Wang W."/>
            <person name="Yuan L."/>
            <person name="Cao M."/>
            <person name="McDermott J."/>
            <person name="Samudrala R."/>
            <person name="Wang J."/>
            <person name="Wong G.K.-S."/>
            <person name="Yang H."/>
        </authorList>
    </citation>
    <scope>NUCLEOTIDE SEQUENCE [LARGE SCALE GENOMIC DNA]</scope>
    <source>
        <strain>cv. Nipponbare</strain>
    </source>
</reference>
<reference key="6">
    <citation type="journal article" date="2003" name="Science">
        <title>Collection, mapping, and annotation of over 28,000 cDNA clones from japonica rice.</title>
        <authorList>
            <consortium name="The rice full-length cDNA consortium"/>
        </authorList>
    </citation>
    <scope>NUCLEOTIDE SEQUENCE [LARGE SCALE MRNA]</scope>
    <source>
        <strain>cv. Nipponbare</strain>
    </source>
</reference>
<reference key="7">
    <citation type="journal article" date="2007" name="J. Exp. Bot.">
        <title>Genome-wide analysis of the UDP-glucose dehydrogenase gene family in Arabidopsis, a key enzyme for matrix polysaccharides in cell walls.</title>
        <authorList>
            <person name="Klinghammer M."/>
            <person name="Tenhaken R."/>
        </authorList>
    </citation>
    <scope>GENE FAMILY</scope>
    <scope>NOMENCLATURE</scope>
</reference>
<feature type="chain" id="PRO_0000422269" description="UDP-glucose 6-dehydrogenase 3">
    <location>
        <begin position="1"/>
        <end position="480"/>
    </location>
</feature>
<feature type="active site" description="Nucleophile" evidence="1">
    <location>
        <position position="272"/>
    </location>
</feature>
<feature type="binding site" evidence="1">
    <location>
        <begin position="8"/>
        <end position="13"/>
    </location>
    <ligand>
        <name>NAD(+)</name>
        <dbReference type="ChEBI" id="CHEBI:57540"/>
    </ligand>
</feature>
<feature type="binding site" evidence="1">
    <location>
        <position position="33"/>
    </location>
    <ligand>
        <name>NAD(+)</name>
        <dbReference type="ChEBI" id="CHEBI:57540"/>
    </ligand>
</feature>
<feature type="binding site" evidence="1">
    <location>
        <position position="38"/>
    </location>
    <ligand>
        <name>NAD(+)</name>
        <dbReference type="ChEBI" id="CHEBI:57540"/>
    </ligand>
</feature>
<feature type="binding site" evidence="1">
    <location>
        <begin position="86"/>
        <end position="90"/>
    </location>
    <ligand>
        <name>NAD(+)</name>
        <dbReference type="ChEBI" id="CHEBI:57540"/>
    </ligand>
</feature>
<feature type="binding site" evidence="1">
    <location>
        <begin position="127"/>
        <end position="128"/>
    </location>
    <ligand>
        <name>NAD(+)</name>
        <dbReference type="ChEBI" id="CHEBI:57540"/>
    </ligand>
</feature>
<feature type="binding site" evidence="1">
    <location>
        <begin position="157"/>
        <end position="161"/>
    </location>
    <ligand>
        <name>substrate</name>
    </ligand>
</feature>
<feature type="binding site" evidence="1">
    <location>
        <position position="161"/>
    </location>
    <ligand>
        <name>NAD(+)</name>
        <dbReference type="ChEBI" id="CHEBI:57540"/>
    </ligand>
</feature>
<feature type="binding site" evidence="1">
    <location>
        <begin position="216"/>
        <end position="223"/>
    </location>
    <ligand>
        <name>substrate</name>
    </ligand>
</feature>
<feature type="binding site" evidence="1">
    <location>
        <begin position="256"/>
        <end position="269"/>
    </location>
    <ligand>
        <name>substrate</name>
    </ligand>
</feature>
<feature type="binding site" evidence="1">
    <location>
        <begin position="272"/>
        <end position="275"/>
    </location>
    <ligand>
        <name>NAD(+)</name>
        <dbReference type="ChEBI" id="CHEBI:57540"/>
    </ligand>
</feature>
<feature type="binding site" evidence="1">
    <location>
        <begin position="334"/>
        <end position="335"/>
    </location>
    <ligand>
        <name>substrate</name>
    </ligand>
</feature>
<feature type="binding site" evidence="1">
    <location>
        <position position="342"/>
    </location>
    <ligand>
        <name>NAD(+)</name>
        <dbReference type="ChEBI" id="CHEBI:57540"/>
    </ligand>
</feature>
<feature type="binding site" evidence="1">
    <location>
        <position position="447"/>
    </location>
    <ligand>
        <name>substrate</name>
    </ligand>
</feature>
<feature type="modified residue" description="Phosphoserine" evidence="1">
    <location>
        <position position="393"/>
    </location>
</feature>
<feature type="sequence conflict" description="In Ref. 6; AK098880." evidence="2" ref="6">
    <original>A</original>
    <variation>S</variation>
    <location>
        <position position="114"/>
    </location>
</feature>
<sequence length="480" mass="52899">MVKICCIGAGYVGGPTMAVIALKCPAIEVVVVDISKPRIDAWNSEQLPIYEPGLDEVVKECRGRNLFFSTDVEKHVAEADIIFVSVNTPTKTRGLGAGKAADLTYWESAARMIADVSKSDKIVVEKSTVPVKTAEAIEKILTHNSKGINYQILSNPEFLAEGTAIDDLFKPDRVLIGGRETAEGRKAVQALKSVYAHWVPEDRIITTNLWSAELSKLAANAFLAQRISSVNAISALCEATGANVTEVAYAVGKDSRIGPKFLNASVGFGGSCFQKDILNLVYICECNGLPEVANYWKQVIKINDYQKSRFVNRVVSSMFNTVSGKKIAVLGFAFKKDTGDTRETPAIDVCHGLLGDKAQISIYDPQVTEDQIQRDLAMGKFDWDHPMHLQPTSPTAFKQVSVVWDAYEATKNAHGLCILTEWDEFKTLDYQKIYDNMQKPAFVFDGRNVVDPEKLREIGFIVYSIGKPLDAWLKDMPAVA</sequence>
<protein>
    <recommendedName>
        <fullName>UDP-glucose 6-dehydrogenase 3</fullName>
        <shortName>UDP-Glc dehydrogenase 3</shortName>
        <shortName>UDP-GlcDH 3</shortName>
        <shortName>UDPGDH 3</shortName>
        <ecNumber>1.1.1.22</ecNumber>
    </recommendedName>
    <alternativeName>
        <fullName>Os-UGD3</fullName>
    </alternativeName>
</protein>
<dbReference type="EC" id="1.1.1.22"/>
<dbReference type="EMBL" id="AC079887">
    <property type="protein sequence ID" value="AAK16194.1"/>
    <property type="molecule type" value="Genomic_DNA"/>
</dbReference>
<dbReference type="EMBL" id="DP000009">
    <property type="protein sequence ID" value="ABF98971.1"/>
    <property type="molecule type" value="Genomic_DNA"/>
</dbReference>
<dbReference type="EMBL" id="DP000009">
    <property type="protein sequence ID" value="ABF98973.1"/>
    <property type="molecule type" value="Genomic_DNA"/>
</dbReference>
<dbReference type="EMBL" id="AP008209">
    <property type="protein sequence ID" value="BAF13242.1"/>
    <property type="molecule type" value="Genomic_DNA"/>
</dbReference>
<dbReference type="EMBL" id="AP014959">
    <property type="protein sequence ID" value="BAS86472.1"/>
    <property type="molecule type" value="Genomic_DNA"/>
</dbReference>
<dbReference type="EMBL" id="CM000140">
    <property type="protein sequence ID" value="EEE59961.1"/>
    <property type="molecule type" value="Genomic_DNA"/>
</dbReference>
<dbReference type="EMBL" id="AK098880">
    <property type="status" value="NOT_ANNOTATED_CDS"/>
    <property type="molecule type" value="mRNA"/>
</dbReference>
<dbReference type="RefSeq" id="XP_015631440.1">
    <property type="nucleotide sequence ID" value="XM_015775954.1"/>
</dbReference>
<dbReference type="SMR" id="Q9AUV6"/>
<dbReference type="FunCoup" id="Q9AUV6">
    <property type="interactions" value="2464"/>
</dbReference>
<dbReference type="STRING" id="39947.Q9AUV6"/>
<dbReference type="CarbonylDB" id="Q9AUV6"/>
<dbReference type="PaxDb" id="39947-Q9AUV6"/>
<dbReference type="EnsemblPlants" id="Os03t0757900-01">
    <property type="protein sequence ID" value="Os03t0757900-01"/>
    <property type="gene ID" value="Os03g0757900"/>
</dbReference>
<dbReference type="Gramene" id="Os03t0757900-01">
    <property type="protein sequence ID" value="Os03t0757900-01"/>
    <property type="gene ID" value="Os03g0757900"/>
</dbReference>
<dbReference type="KEGG" id="dosa:Os03g0757900"/>
<dbReference type="eggNOG" id="KOG2666">
    <property type="taxonomic scope" value="Eukaryota"/>
</dbReference>
<dbReference type="HOGENOM" id="CLU_023810_7_0_1"/>
<dbReference type="InParanoid" id="Q9AUV6"/>
<dbReference type="OMA" id="LFMGFTE"/>
<dbReference type="OrthoDB" id="5059218at2759"/>
<dbReference type="PlantReactome" id="R-OSA-1119452">
    <property type="pathway name" value="Galactose degradation II"/>
</dbReference>
<dbReference type="PlantReactome" id="R-OSA-1119563">
    <property type="pathway name" value="UDP-D-xylose biosynthesis"/>
</dbReference>
<dbReference type="PlantReactome" id="R-OSA-1119574">
    <property type="pathway name" value="UDP-L-arabinose biosynthesis and transport"/>
</dbReference>
<dbReference type="UniPathway" id="UPA00038">
    <property type="reaction ID" value="UER00491"/>
</dbReference>
<dbReference type="Proteomes" id="UP000000763">
    <property type="component" value="Chromosome 3"/>
</dbReference>
<dbReference type="Proteomes" id="UP000007752">
    <property type="component" value="Chromosome 3"/>
</dbReference>
<dbReference type="Proteomes" id="UP000059680">
    <property type="component" value="Chromosome 3"/>
</dbReference>
<dbReference type="GO" id="GO:0005634">
    <property type="term" value="C:nucleus"/>
    <property type="evidence" value="ECO:0000318"/>
    <property type="project" value="GO_Central"/>
</dbReference>
<dbReference type="GO" id="GO:0051287">
    <property type="term" value="F:NAD binding"/>
    <property type="evidence" value="ECO:0007669"/>
    <property type="project" value="InterPro"/>
</dbReference>
<dbReference type="GO" id="GO:0003979">
    <property type="term" value="F:UDP-glucose 6-dehydrogenase activity"/>
    <property type="evidence" value="ECO:0007669"/>
    <property type="project" value="UniProtKB-EC"/>
</dbReference>
<dbReference type="GO" id="GO:0006024">
    <property type="term" value="P:glycosaminoglycan biosynthetic process"/>
    <property type="evidence" value="ECO:0000318"/>
    <property type="project" value="GO_Central"/>
</dbReference>
<dbReference type="GO" id="GO:0006065">
    <property type="term" value="P:UDP-glucuronate biosynthetic process"/>
    <property type="evidence" value="ECO:0007669"/>
    <property type="project" value="UniProtKB-UniPathway"/>
</dbReference>
<dbReference type="FunFam" id="1.20.5.100:FF:000001">
    <property type="entry name" value="UDP-glucose 6-dehydrogenase"/>
    <property type="match status" value="1"/>
</dbReference>
<dbReference type="FunFam" id="3.40.50.720:FF:000032">
    <property type="entry name" value="UDP-glucose 6-dehydrogenase"/>
    <property type="match status" value="1"/>
</dbReference>
<dbReference type="FunFam" id="3.40.50.720:FF:000089">
    <property type="entry name" value="UDP-glucose 6-dehydrogenase"/>
    <property type="match status" value="1"/>
</dbReference>
<dbReference type="Gene3D" id="1.20.5.100">
    <property type="entry name" value="Cytochrome c1, transmembrane anchor, C-terminal"/>
    <property type="match status" value="1"/>
</dbReference>
<dbReference type="Gene3D" id="3.40.50.720">
    <property type="entry name" value="NAD(P)-binding Rossmann-like Domain"/>
    <property type="match status" value="2"/>
</dbReference>
<dbReference type="InterPro" id="IPR008927">
    <property type="entry name" value="6-PGluconate_DH-like_C_sf"/>
</dbReference>
<dbReference type="InterPro" id="IPR036291">
    <property type="entry name" value="NAD(P)-bd_dom_sf"/>
</dbReference>
<dbReference type="InterPro" id="IPR017476">
    <property type="entry name" value="UDP-Glc/GDP-Man"/>
</dbReference>
<dbReference type="InterPro" id="IPR014027">
    <property type="entry name" value="UDP-Glc/GDP-Man_DH_C"/>
</dbReference>
<dbReference type="InterPro" id="IPR036220">
    <property type="entry name" value="UDP-Glc/GDP-Man_DH_C_sf"/>
</dbReference>
<dbReference type="InterPro" id="IPR014026">
    <property type="entry name" value="UDP-Glc/GDP-Man_DH_dimer"/>
</dbReference>
<dbReference type="InterPro" id="IPR001732">
    <property type="entry name" value="UDP-Glc/GDP-Man_DH_N"/>
</dbReference>
<dbReference type="InterPro" id="IPR028356">
    <property type="entry name" value="UDPglc_DH_euk"/>
</dbReference>
<dbReference type="NCBIfam" id="TIGR03026">
    <property type="entry name" value="NDP-sugDHase"/>
    <property type="match status" value="1"/>
</dbReference>
<dbReference type="PANTHER" id="PTHR11374:SF3">
    <property type="entry name" value="UDP-GLUCOSE 6-DEHYDROGENASE"/>
    <property type="match status" value="1"/>
</dbReference>
<dbReference type="PANTHER" id="PTHR11374">
    <property type="entry name" value="UDP-GLUCOSE DEHYDROGENASE/UDP-MANNAC DEHYDROGENASE"/>
    <property type="match status" value="1"/>
</dbReference>
<dbReference type="Pfam" id="PF00984">
    <property type="entry name" value="UDPG_MGDP_dh"/>
    <property type="match status" value="1"/>
</dbReference>
<dbReference type="Pfam" id="PF03720">
    <property type="entry name" value="UDPG_MGDP_dh_C"/>
    <property type="match status" value="1"/>
</dbReference>
<dbReference type="Pfam" id="PF03721">
    <property type="entry name" value="UDPG_MGDP_dh_N"/>
    <property type="match status" value="1"/>
</dbReference>
<dbReference type="PIRSF" id="PIRSF500133">
    <property type="entry name" value="UDPglc_DH_euk"/>
    <property type="match status" value="1"/>
</dbReference>
<dbReference type="PIRSF" id="PIRSF000124">
    <property type="entry name" value="UDPglc_GDPman_dh"/>
    <property type="match status" value="1"/>
</dbReference>
<dbReference type="SMART" id="SM00984">
    <property type="entry name" value="UDPG_MGDP_dh_C"/>
    <property type="match status" value="1"/>
</dbReference>
<dbReference type="SUPFAM" id="SSF48179">
    <property type="entry name" value="6-phosphogluconate dehydrogenase C-terminal domain-like"/>
    <property type="match status" value="1"/>
</dbReference>
<dbReference type="SUPFAM" id="SSF51735">
    <property type="entry name" value="NAD(P)-binding Rossmann-fold domains"/>
    <property type="match status" value="1"/>
</dbReference>
<dbReference type="SUPFAM" id="SSF52413">
    <property type="entry name" value="UDP-glucose/GDP-mannose dehydrogenase C-terminal domain"/>
    <property type="match status" value="1"/>
</dbReference>
<evidence type="ECO:0000250" key="1"/>
<evidence type="ECO:0000305" key="2"/>
<accession>Q9AUV6</accession>
<accession>A0A0P0W388</accession>
<comment type="function">
    <text evidence="1">Involved in the biosynthesis of UDP-glucuronic acid (UDP-GlcA), providing nucleotide sugars for cell-wall polymers.</text>
</comment>
<comment type="catalytic activity">
    <reaction>
        <text>UDP-alpha-D-glucose + 2 NAD(+) + H2O = UDP-alpha-D-glucuronate + 2 NADH + 3 H(+)</text>
        <dbReference type="Rhea" id="RHEA:23596"/>
        <dbReference type="ChEBI" id="CHEBI:15377"/>
        <dbReference type="ChEBI" id="CHEBI:15378"/>
        <dbReference type="ChEBI" id="CHEBI:57540"/>
        <dbReference type="ChEBI" id="CHEBI:57945"/>
        <dbReference type="ChEBI" id="CHEBI:58052"/>
        <dbReference type="ChEBI" id="CHEBI:58885"/>
        <dbReference type="EC" id="1.1.1.22"/>
    </reaction>
</comment>
<comment type="pathway">
    <text>Nucleotide-sugar biosynthesis; UDP-alpha-D-glucuronate biosynthesis; UDP-alpha-D-glucuronate from UDP-alpha-D-glucose: step 1/1.</text>
</comment>
<comment type="similarity">
    <text evidence="2">Belongs to the UDP-glucose/GDP-mannose dehydrogenase family.</text>
</comment>
<keyword id="KW-0520">NAD</keyword>
<keyword id="KW-0560">Oxidoreductase</keyword>
<keyword id="KW-0597">Phosphoprotein</keyword>
<keyword id="KW-1185">Reference proteome</keyword>